<protein>
    <recommendedName>
        <fullName>Fiber protein</fullName>
        <shortName>SPIKE</shortName>
    </recommendedName>
    <alternativeName>
        <fullName>Protein IV</fullName>
    </alternativeName>
</protein>
<evidence type="ECO:0000250" key="1"/>
<evidence type="ECO:0000256" key="2">
    <source>
        <dbReference type="SAM" id="MobiDB-lite"/>
    </source>
</evidence>
<evidence type="ECO:0000305" key="3"/>
<gene>
    <name type="ORF">L5</name>
</gene>
<comment type="function">
    <text evidence="1">Forms spikes that protrude from each vertex of the icosahedral capsid. Interacts with host receptor to provide virion initial attachment to target cell. Fiber proteins are shed during virus entry, when virus is still at the cell surface (By similarity).</text>
</comment>
<comment type="subunit">
    <text evidence="1">Homotrimer. Interacts (via N-terminal tail region) with pentons (By similarity).</text>
</comment>
<comment type="subcellular location">
    <subcellularLocation>
        <location evidence="1">Virion</location>
    </subcellularLocation>
    <subcellularLocation>
        <location evidence="1">Host nucleus</location>
    </subcellularLocation>
    <text evidence="1">Anchored to the pentons, protrudes from the virion surface.</text>
</comment>
<comment type="induction">
    <text>Expressed in the late phase of the viral replicative cycle.</text>
</comment>
<comment type="domain">
    <text evidence="1">The tail region anchors the fiber to penton base capsomers, whereas the shaft, built from several repeated motifs, allows the knob to protrude from the virion.</text>
</comment>
<comment type="miscellaneous">
    <text evidence="1">All late proteins expressed from the major late promoter are produced by alternative splicing and alternative polyadenylation of the same gene giving rise to non-overlapping ORFs. A leader sequence is present in the N-terminus of all these mRNAs and is recognized by the viral shutoff protein to provide expression although conventional translation via ribosome scanning from the cap has been shut off in the host cell (By similarity).</text>
</comment>
<comment type="similarity">
    <text evidence="3">Belongs to the adenoviridae fiber family.</text>
</comment>
<reference key="1">
    <citation type="journal article" date="1991" name="Virology">
        <title>Sequence analysis of putative E3 and fiber genomic regions of two strains of canine adenovirus type 1.</title>
        <authorList>
            <person name="Dragulev B.P."/>
            <person name="Sira S."/>
            <person name="Abouhaidar M.G."/>
            <person name="Campbell J.B."/>
        </authorList>
    </citation>
    <scope>NUCLEOTIDE SEQUENCE [GENOMIC DNA]</scope>
</reference>
<reference key="2">
    <citation type="submission" date="1996-08" db="EMBL/GenBank/DDBJ databases">
        <title>DNA sequence and genomic organization of canine adenovirus type 1.</title>
        <authorList>
            <person name="Campbell J.B."/>
            <person name="Zhao Y."/>
        </authorList>
    </citation>
    <scope>NUCLEOTIDE SEQUENCE [LARGE SCALE GENOMIC DNA]</scope>
</reference>
<name>SPIKE_ADECC</name>
<feature type="chain" id="PRO_0000221804" description="Fiber protein">
    <location>
        <begin position="1"/>
        <end position="543"/>
    </location>
</feature>
<feature type="region of interest" description="Disordered" evidence="2">
    <location>
        <begin position="1"/>
        <end position="36"/>
    </location>
</feature>
<proteinExistence type="evidence at transcript level"/>
<organism>
    <name type="scientific">Canine adenovirus serotype 1 (strain CLL)</name>
    <name type="common">CAdV-1</name>
    <name type="synonym">Canine adenovirus 1 (strain CLL)</name>
    <dbReference type="NCBI Taxonomy" id="69150"/>
    <lineage>
        <taxon>Viruses</taxon>
        <taxon>Varidnaviria</taxon>
        <taxon>Bamfordvirae</taxon>
        <taxon>Preplasmiviricota</taxon>
        <taxon>Tectiliviricetes</taxon>
        <taxon>Rowavirales</taxon>
        <taxon>Adenoviridae</taxon>
        <taxon>Mastadenovirus</taxon>
        <taxon>Canine mastadenovirus A</taxon>
    </lineage>
</organism>
<accession>Q65961</accession>
<keyword id="KW-0167">Capsid protein</keyword>
<keyword id="KW-1048">Host nucleus</keyword>
<keyword id="KW-0945">Host-virus interaction</keyword>
<keyword id="KW-0426">Late protein</keyword>
<keyword id="KW-1233">Viral attachment to host adhesion receptor</keyword>
<keyword id="KW-1161">Viral attachment to host cell</keyword>
<keyword id="KW-0946">Virion</keyword>
<keyword id="KW-1160">Virus entry into host cell</keyword>
<sequence length="543" mass="57115">MKRTRRSLPANFDPVYPYDAPKPSTQPPFFNDRKGLTESSPGTLAVNISPPLTFSNLGAIKLSTGAGLILKEGKLEANIGPGLTTNQEGQITVEKDSDGLTFTSPLHKIENTVSLSIGEGLEDESGTLKVNFPSPPPPLLFSPPLAEAGGTVSLPLQESMQVTEGKLGVKPTTYSPPLQKTDQQVSLRVGPGLTVLNGQLQAVQPPATTYKEPLLETENSVSLKVGAGLAVQDGALVATPPNVTFSAPLEKNGNAVSVRVGAGLSIQGNALVATTSPTLTFAYPLIKNNNHITLSAGSGLRVSGGSLTVATGPGLSHINGTIAAVIGAGLKFENNAILAKLGNGLTIRDGAIEAVAPQPSFTPVTLWTGPDPNVNASINGTPVIRSFISLTRDSNLVTVNASFTGEGSYQSVSPTQSQFSLILEFNQFGQLMSTGNLNSTTTWGEKPWGNNTVQVQPSHTWKLCMPNREVYSTPAATLTSCGLNSIAHDGAPNRSIDCMLIINKLRGAATYTLTFRFLNFNKLSSSTVFKTDVLTFTYVGENQ</sequence>
<dbReference type="EMBL" id="U55001">
    <property type="protein sequence ID" value="AAB05451.1"/>
    <property type="molecule type" value="Genomic_DNA"/>
</dbReference>
<dbReference type="SMR" id="Q65961"/>
<dbReference type="GO" id="GO:0042025">
    <property type="term" value="C:host cell nucleus"/>
    <property type="evidence" value="ECO:0007669"/>
    <property type="project" value="UniProtKB-SubCell"/>
</dbReference>
<dbReference type="GO" id="GO:0019028">
    <property type="term" value="C:viral capsid"/>
    <property type="evidence" value="ECO:0007669"/>
    <property type="project" value="UniProtKB-KW"/>
</dbReference>
<dbReference type="GO" id="GO:0098671">
    <property type="term" value="P:adhesion receptor-mediated virion attachment to host cell"/>
    <property type="evidence" value="ECO:0007669"/>
    <property type="project" value="UniProtKB-KW"/>
</dbReference>
<dbReference type="GO" id="GO:0007155">
    <property type="term" value="P:cell adhesion"/>
    <property type="evidence" value="ECO:0007669"/>
    <property type="project" value="InterPro"/>
</dbReference>
<dbReference type="GO" id="GO:0046718">
    <property type="term" value="P:symbiont entry into host cell"/>
    <property type="evidence" value="ECO:0007669"/>
    <property type="project" value="UniProtKB-KW"/>
</dbReference>
<dbReference type="Gene3D" id="6.20.10.20">
    <property type="match status" value="1"/>
</dbReference>
<dbReference type="Gene3D" id="2.60.90.10">
    <property type="entry name" value="Adenovirus pIV-related, attachment domain"/>
    <property type="match status" value="1"/>
</dbReference>
<dbReference type="Gene3D" id="2.10.25.20">
    <property type="entry name" value="reovirus attachment protein sigma1, domain 1"/>
    <property type="match status" value="3"/>
</dbReference>
<dbReference type="InterPro" id="IPR000931">
    <property type="entry name" value="Adeno_fibre"/>
</dbReference>
<dbReference type="InterPro" id="IPR000978">
    <property type="entry name" value="Adeno_fibre_knob"/>
</dbReference>
<dbReference type="InterPro" id="IPR000939">
    <property type="entry name" value="Adenobir_fibre_prot_rpt/shaft"/>
</dbReference>
<dbReference type="InterPro" id="IPR008982">
    <property type="entry name" value="Adenovirus_pIV-like_att"/>
</dbReference>
<dbReference type="InterPro" id="IPR009013">
    <property type="entry name" value="Attachment_protein_shaft_sf"/>
</dbReference>
<dbReference type="Pfam" id="PF00541">
    <property type="entry name" value="Adeno_knob"/>
    <property type="match status" value="1"/>
</dbReference>
<dbReference type="Pfam" id="PF00608">
    <property type="entry name" value="Adeno_shaft"/>
    <property type="match status" value="7"/>
</dbReference>
<dbReference type="PRINTS" id="PR00307">
    <property type="entry name" value="ADENOVSFIBRE"/>
</dbReference>
<dbReference type="SUPFAM" id="SSF51225">
    <property type="entry name" value="Fibre shaft of virus attachment proteins"/>
    <property type="match status" value="3"/>
</dbReference>
<dbReference type="SUPFAM" id="SSF49835">
    <property type="entry name" value="Virus attachment protein globular domain"/>
    <property type="match status" value="1"/>
</dbReference>
<organismHost>
    <name type="scientific">Canis lupus familiaris</name>
    <name type="common">Dog</name>
    <name type="synonym">Canis familiaris</name>
    <dbReference type="NCBI Taxonomy" id="9615"/>
</organismHost>